<accession>A9AF28</accession>
<keyword id="KW-1003">Cell membrane</keyword>
<keyword id="KW-0210">Decarboxylase</keyword>
<keyword id="KW-0285">Flavoprotein</keyword>
<keyword id="KW-0288">FMN</keyword>
<keyword id="KW-0456">Lyase</keyword>
<keyword id="KW-0464">Manganese</keyword>
<keyword id="KW-0472">Membrane</keyword>
<keyword id="KW-0479">Metal-binding</keyword>
<keyword id="KW-1185">Reference proteome</keyword>
<keyword id="KW-0831">Ubiquinone biosynthesis</keyword>
<organism>
    <name type="scientific">Burkholderia multivorans (strain ATCC 17616 / 249)</name>
    <dbReference type="NCBI Taxonomy" id="395019"/>
    <lineage>
        <taxon>Bacteria</taxon>
        <taxon>Pseudomonadati</taxon>
        <taxon>Pseudomonadota</taxon>
        <taxon>Betaproteobacteria</taxon>
        <taxon>Burkholderiales</taxon>
        <taxon>Burkholderiaceae</taxon>
        <taxon>Burkholderia</taxon>
        <taxon>Burkholderia cepacia complex</taxon>
    </lineage>
</organism>
<protein>
    <recommendedName>
        <fullName evidence="1">3-octaprenyl-4-hydroxybenzoate carboxy-lyase</fullName>
        <ecNumber evidence="1">4.1.1.98</ecNumber>
    </recommendedName>
    <alternativeName>
        <fullName evidence="1">Polyprenyl p-hydroxybenzoate decarboxylase</fullName>
    </alternativeName>
</protein>
<evidence type="ECO:0000255" key="1">
    <source>
        <dbReference type="HAMAP-Rule" id="MF_01636"/>
    </source>
</evidence>
<gene>
    <name evidence="1" type="primary">ubiD</name>
    <name type="ordered locus">Bmul_2445</name>
    <name type="ordered locus">BMULJ_00788</name>
</gene>
<proteinExistence type="inferred from homology"/>
<comment type="function">
    <text evidence="1">Catalyzes the decarboxylation of 3-octaprenyl-4-hydroxy benzoate to 2-octaprenylphenol, an intermediate step in ubiquinone biosynthesis.</text>
</comment>
<comment type="catalytic activity">
    <reaction evidence="1">
        <text>a 4-hydroxy-3-(all-trans-polyprenyl)benzoate + H(+) = a 2-(all-trans-polyprenyl)phenol + CO2</text>
        <dbReference type="Rhea" id="RHEA:41680"/>
        <dbReference type="Rhea" id="RHEA-COMP:9514"/>
        <dbReference type="Rhea" id="RHEA-COMP:9516"/>
        <dbReference type="ChEBI" id="CHEBI:1269"/>
        <dbReference type="ChEBI" id="CHEBI:15378"/>
        <dbReference type="ChEBI" id="CHEBI:16526"/>
        <dbReference type="ChEBI" id="CHEBI:78396"/>
        <dbReference type="EC" id="4.1.1.98"/>
    </reaction>
</comment>
<comment type="cofactor">
    <cofactor evidence="1">
        <name>prenylated FMN</name>
        <dbReference type="ChEBI" id="CHEBI:87746"/>
    </cofactor>
    <text evidence="1">Binds 1 prenylated FMN per subunit.</text>
</comment>
<comment type="cofactor">
    <cofactor evidence="1">
        <name>Mn(2+)</name>
        <dbReference type="ChEBI" id="CHEBI:29035"/>
    </cofactor>
</comment>
<comment type="pathway">
    <text evidence="1">Cofactor biosynthesis; ubiquinone biosynthesis.</text>
</comment>
<comment type="subunit">
    <text evidence="1">Homohexamer.</text>
</comment>
<comment type="subcellular location">
    <subcellularLocation>
        <location evidence="1">Cell membrane</location>
        <topology evidence="1">Peripheral membrane protein</topology>
    </subcellularLocation>
</comment>
<comment type="similarity">
    <text evidence="1">Belongs to the UbiD family.</text>
</comment>
<dbReference type="EC" id="4.1.1.98" evidence="1"/>
<dbReference type="EMBL" id="CP000868">
    <property type="protein sequence ID" value="ABX16130.1"/>
    <property type="molecule type" value="Genomic_DNA"/>
</dbReference>
<dbReference type="EMBL" id="AP009385">
    <property type="protein sequence ID" value="BAG42748.1"/>
    <property type="molecule type" value="Genomic_DNA"/>
</dbReference>
<dbReference type="RefSeq" id="WP_012213943.1">
    <property type="nucleotide sequence ID" value="NC_010084.1"/>
</dbReference>
<dbReference type="SMR" id="A9AF28"/>
<dbReference type="STRING" id="395019.BMULJ_00788"/>
<dbReference type="KEGG" id="bmj:BMULJ_00788"/>
<dbReference type="KEGG" id="bmu:Bmul_2445"/>
<dbReference type="eggNOG" id="COG0043">
    <property type="taxonomic scope" value="Bacteria"/>
</dbReference>
<dbReference type="HOGENOM" id="CLU_023348_4_1_4"/>
<dbReference type="UniPathway" id="UPA00232"/>
<dbReference type="Proteomes" id="UP000008815">
    <property type="component" value="Chromosome 1"/>
</dbReference>
<dbReference type="GO" id="GO:0005829">
    <property type="term" value="C:cytosol"/>
    <property type="evidence" value="ECO:0007669"/>
    <property type="project" value="TreeGrafter"/>
</dbReference>
<dbReference type="GO" id="GO:0005886">
    <property type="term" value="C:plasma membrane"/>
    <property type="evidence" value="ECO:0007669"/>
    <property type="project" value="UniProtKB-SubCell"/>
</dbReference>
<dbReference type="GO" id="GO:0008694">
    <property type="term" value="F:3-octaprenyl-4-hydroxybenzoate carboxy-lyase activity"/>
    <property type="evidence" value="ECO:0007669"/>
    <property type="project" value="UniProtKB-UniRule"/>
</dbReference>
<dbReference type="GO" id="GO:0046872">
    <property type="term" value="F:metal ion binding"/>
    <property type="evidence" value="ECO:0007669"/>
    <property type="project" value="UniProtKB-KW"/>
</dbReference>
<dbReference type="GO" id="GO:0006744">
    <property type="term" value="P:ubiquinone biosynthetic process"/>
    <property type="evidence" value="ECO:0007669"/>
    <property type="project" value="UniProtKB-UniRule"/>
</dbReference>
<dbReference type="FunFam" id="3.40.1670.10:FF:000001">
    <property type="entry name" value="3-octaprenyl-4-hydroxybenzoate carboxy-lyase"/>
    <property type="match status" value="1"/>
</dbReference>
<dbReference type="Gene3D" id="1.20.5.570">
    <property type="entry name" value="Single helix bin"/>
    <property type="match status" value="1"/>
</dbReference>
<dbReference type="Gene3D" id="3.40.1670.10">
    <property type="entry name" value="UbiD C-terminal domain-like"/>
    <property type="match status" value="1"/>
</dbReference>
<dbReference type="HAMAP" id="MF_01636">
    <property type="entry name" value="UbiD"/>
    <property type="match status" value="1"/>
</dbReference>
<dbReference type="InterPro" id="IPR002830">
    <property type="entry name" value="UbiD"/>
</dbReference>
<dbReference type="InterPro" id="IPR049381">
    <property type="entry name" value="UbiD-like_C"/>
</dbReference>
<dbReference type="InterPro" id="IPR049383">
    <property type="entry name" value="UbiD-like_N"/>
</dbReference>
<dbReference type="InterPro" id="IPR023677">
    <property type="entry name" value="UbiD_bacteria"/>
</dbReference>
<dbReference type="InterPro" id="IPR048304">
    <property type="entry name" value="UbiD_Rift_dom"/>
</dbReference>
<dbReference type="NCBIfam" id="TIGR00148">
    <property type="entry name" value="UbiD family decarboxylase"/>
    <property type="match status" value="2"/>
</dbReference>
<dbReference type="PANTHER" id="PTHR30108">
    <property type="entry name" value="3-OCTAPRENYL-4-HYDROXYBENZOATE CARBOXY-LYASE-RELATED"/>
    <property type="match status" value="1"/>
</dbReference>
<dbReference type="PANTHER" id="PTHR30108:SF17">
    <property type="entry name" value="FERULIC ACID DECARBOXYLASE 1"/>
    <property type="match status" value="1"/>
</dbReference>
<dbReference type="Pfam" id="PF01977">
    <property type="entry name" value="UbiD"/>
    <property type="match status" value="1"/>
</dbReference>
<dbReference type="Pfam" id="PF20696">
    <property type="entry name" value="UbiD_C"/>
    <property type="match status" value="1"/>
</dbReference>
<dbReference type="Pfam" id="PF20695">
    <property type="entry name" value="UbiD_N"/>
    <property type="match status" value="1"/>
</dbReference>
<dbReference type="SUPFAM" id="SSF50475">
    <property type="entry name" value="FMN-binding split barrel"/>
    <property type="match status" value="1"/>
</dbReference>
<dbReference type="SUPFAM" id="SSF143968">
    <property type="entry name" value="UbiD C-terminal domain-like"/>
    <property type="match status" value="1"/>
</dbReference>
<feature type="chain" id="PRO_1000186708" description="3-octaprenyl-4-hydroxybenzoate carboxy-lyase">
    <location>
        <begin position="1"/>
        <end position="518"/>
    </location>
</feature>
<feature type="active site" description="Proton donor" evidence="1">
    <location>
        <position position="318"/>
    </location>
</feature>
<feature type="binding site" evidence="1">
    <location>
        <position position="177"/>
    </location>
    <ligand>
        <name>Mn(2+)</name>
        <dbReference type="ChEBI" id="CHEBI:29035"/>
    </ligand>
</feature>
<feature type="binding site" evidence="1">
    <location>
        <begin position="180"/>
        <end position="182"/>
    </location>
    <ligand>
        <name>prenylated FMN</name>
        <dbReference type="ChEBI" id="CHEBI:87746"/>
    </ligand>
</feature>
<feature type="binding site" evidence="1">
    <location>
        <begin position="194"/>
        <end position="196"/>
    </location>
    <ligand>
        <name>prenylated FMN</name>
        <dbReference type="ChEBI" id="CHEBI:87746"/>
    </ligand>
</feature>
<feature type="binding site" evidence="1">
    <location>
        <begin position="199"/>
        <end position="200"/>
    </location>
    <ligand>
        <name>prenylated FMN</name>
        <dbReference type="ChEBI" id="CHEBI:87746"/>
    </ligand>
</feature>
<feature type="binding site" evidence="1">
    <location>
        <position position="243"/>
    </location>
    <ligand>
        <name>Mn(2+)</name>
        <dbReference type="ChEBI" id="CHEBI:29035"/>
    </ligand>
</feature>
<sequence>MKYKDLRDFIQRLEALGELRRVTQPVSPVLEMTELCDRVLRAGGPALLFEAPPGYAFPVLGNLFGTPRRVALGMGVDAGDDAALDSLRDLGRLLSALKEPDPPRSLKDAGKLLSLAKAVWDMAPKTVSSPPCQEIVWEGADVDLHKLPIQTCWPGDAGPLVTWGLTVTRGPNKPRQNLGIYRQQLIGRNKLIMRWLAHRGGALDFREFALKNPGKPYPVAVVLGADPATTLGAVTPVPDSLSEYQFAGLLRGSRTELAKCLTPGVDTLQVPARAEIVLEGFIYPQDGTPAPAPAGAPPRPAGQAAAAYEHALEGPYGDHTGYYNEQEWFPVFTVERITMRRDAIYHSTYTGKPPDEPAILGVALNEVFVPLLQKQFAEITDFYLPPEGCSYRMAIVQMKKSYAGHAKRVMFGVWSFLRQFMYTKFIVVVDEDVNIRDWKEVIWAITTRVDPVRDTVMVDNTPIDYLDFASPVAGLGSKMGLDATNKWPGETNREWGRPIEMDAKVKARVDRLWQDIGL</sequence>
<reference key="1">
    <citation type="submission" date="2007-10" db="EMBL/GenBank/DDBJ databases">
        <title>Complete sequence of chromosome 1 of Burkholderia multivorans ATCC 17616.</title>
        <authorList>
            <person name="Copeland A."/>
            <person name="Lucas S."/>
            <person name="Lapidus A."/>
            <person name="Barry K."/>
            <person name="Glavina del Rio T."/>
            <person name="Dalin E."/>
            <person name="Tice H."/>
            <person name="Pitluck S."/>
            <person name="Chain P."/>
            <person name="Malfatti S."/>
            <person name="Shin M."/>
            <person name="Vergez L."/>
            <person name="Schmutz J."/>
            <person name="Larimer F."/>
            <person name="Land M."/>
            <person name="Hauser L."/>
            <person name="Kyrpides N."/>
            <person name="Kim E."/>
            <person name="Tiedje J."/>
            <person name="Richardson P."/>
        </authorList>
    </citation>
    <scope>NUCLEOTIDE SEQUENCE [LARGE SCALE GENOMIC DNA]</scope>
    <source>
        <strain>ATCC 17616 / 249</strain>
    </source>
</reference>
<reference key="2">
    <citation type="submission" date="2007-04" db="EMBL/GenBank/DDBJ databases">
        <title>Complete genome sequence of Burkholderia multivorans ATCC 17616.</title>
        <authorList>
            <person name="Ohtsubo Y."/>
            <person name="Yamashita A."/>
            <person name="Kurokawa K."/>
            <person name="Takami H."/>
            <person name="Yuhara S."/>
            <person name="Nishiyama E."/>
            <person name="Endo R."/>
            <person name="Miyazaki R."/>
            <person name="Ono A."/>
            <person name="Yano K."/>
            <person name="Ito M."/>
            <person name="Sota M."/>
            <person name="Yuji N."/>
            <person name="Hattori M."/>
            <person name="Tsuda M."/>
        </authorList>
    </citation>
    <scope>NUCLEOTIDE SEQUENCE [LARGE SCALE GENOMIC DNA]</scope>
    <source>
        <strain>ATCC 17616 / 249</strain>
    </source>
</reference>
<name>UBID_BURM1</name>